<dbReference type="EC" id="7.1.1.-" evidence="1"/>
<dbReference type="EMBL" id="CP000542">
    <property type="protein sequence ID" value="ABM58543.1"/>
    <property type="molecule type" value="Genomic_DNA"/>
</dbReference>
<dbReference type="RefSeq" id="WP_011810540.1">
    <property type="nucleotide sequence ID" value="NC_008786.1"/>
</dbReference>
<dbReference type="SMR" id="A1WLN6"/>
<dbReference type="STRING" id="391735.Veis_2805"/>
<dbReference type="GeneID" id="76461303"/>
<dbReference type="KEGG" id="vei:Veis_2805"/>
<dbReference type="eggNOG" id="COG1143">
    <property type="taxonomic scope" value="Bacteria"/>
</dbReference>
<dbReference type="HOGENOM" id="CLU_067218_5_1_4"/>
<dbReference type="OrthoDB" id="9808559at2"/>
<dbReference type="Proteomes" id="UP000000374">
    <property type="component" value="Chromosome"/>
</dbReference>
<dbReference type="GO" id="GO:0005886">
    <property type="term" value="C:plasma membrane"/>
    <property type="evidence" value="ECO:0007669"/>
    <property type="project" value="UniProtKB-SubCell"/>
</dbReference>
<dbReference type="GO" id="GO:0051539">
    <property type="term" value="F:4 iron, 4 sulfur cluster binding"/>
    <property type="evidence" value="ECO:0007669"/>
    <property type="project" value="UniProtKB-KW"/>
</dbReference>
<dbReference type="GO" id="GO:0005506">
    <property type="term" value="F:iron ion binding"/>
    <property type="evidence" value="ECO:0007669"/>
    <property type="project" value="UniProtKB-UniRule"/>
</dbReference>
<dbReference type="GO" id="GO:0050136">
    <property type="term" value="F:NADH:ubiquinone reductase (non-electrogenic) activity"/>
    <property type="evidence" value="ECO:0007669"/>
    <property type="project" value="UniProtKB-UniRule"/>
</dbReference>
<dbReference type="GO" id="GO:0048038">
    <property type="term" value="F:quinone binding"/>
    <property type="evidence" value="ECO:0007669"/>
    <property type="project" value="UniProtKB-KW"/>
</dbReference>
<dbReference type="GO" id="GO:0009060">
    <property type="term" value="P:aerobic respiration"/>
    <property type="evidence" value="ECO:0007669"/>
    <property type="project" value="TreeGrafter"/>
</dbReference>
<dbReference type="FunFam" id="3.30.70.3270:FF:000003">
    <property type="entry name" value="NADH-quinone oxidoreductase subunit I"/>
    <property type="match status" value="1"/>
</dbReference>
<dbReference type="Gene3D" id="3.30.70.3270">
    <property type="match status" value="1"/>
</dbReference>
<dbReference type="HAMAP" id="MF_01351">
    <property type="entry name" value="NDH1_NuoI"/>
    <property type="match status" value="1"/>
</dbReference>
<dbReference type="InterPro" id="IPR017896">
    <property type="entry name" value="4Fe4S_Fe-S-bd"/>
</dbReference>
<dbReference type="InterPro" id="IPR017900">
    <property type="entry name" value="4Fe4S_Fe_S_CS"/>
</dbReference>
<dbReference type="InterPro" id="IPR010226">
    <property type="entry name" value="NADH_quinone_OxRdtase_chainI"/>
</dbReference>
<dbReference type="NCBIfam" id="TIGR01971">
    <property type="entry name" value="NuoI"/>
    <property type="match status" value="1"/>
</dbReference>
<dbReference type="NCBIfam" id="NF004538">
    <property type="entry name" value="PRK05888.1-4"/>
    <property type="match status" value="1"/>
</dbReference>
<dbReference type="NCBIfam" id="NF004539">
    <property type="entry name" value="PRK05888.1-5"/>
    <property type="match status" value="1"/>
</dbReference>
<dbReference type="PANTHER" id="PTHR10849:SF20">
    <property type="entry name" value="NADH DEHYDROGENASE [UBIQUINONE] IRON-SULFUR PROTEIN 8, MITOCHONDRIAL"/>
    <property type="match status" value="1"/>
</dbReference>
<dbReference type="PANTHER" id="PTHR10849">
    <property type="entry name" value="NADH DEHYDROGENASE UBIQUINONE IRON-SULFUR PROTEIN 8, MITOCHONDRIAL"/>
    <property type="match status" value="1"/>
</dbReference>
<dbReference type="Pfam" id="PF12838">
    <property type="entry name" value="Fer4_7"/>
    <property type="match status" value="1"/>
</dbReference>
<dbReference type="SUPFAM" id="SSF54862">
    <property type="entry name" value="4Fe-4S ferredoxins"/>
    <property type="match status" value="1"/>
</dbReference>
<dbReference type="PROSITE" id="PS00198">
    <property type="entry name" value="4FE4S_FER_1"/>
    <property type="match status" value="2"/>
</dbReference>
<dbReference type="PROSITE" id="PS51379">
    <property type="entry name" value="4FE4S_FER_2"/>
    <property type="match status" value="2"/>
</dbReference>
<gene>
    <name evidence="1" type="primary">nuoI</name>
    <name type="ordered locus">Veis_2805</name>
</gene>
<proteinExistence type="inferred from homology"/>
<feature type="chain" id="PRO_0000298558" description="NADH-quinone oxidoreductase subunit I">
    <location>
        <begin position="1"/>
        <end position="169"/>
    </location>
</feature>
<feature type="domain" description="4Fe-4S ferredoxin-type 1" evidence="1">
    <location>
        <begin position="61"/>
        <end position="90"/>
    </location>
</feature>
<feature type="domain" description="4Fe-4S ferredoxin-type 2" evidence="1">
    <location>
        <begin position="100"/>
        <end position="129"/>
    </location>
</feature>
<feature type="binding site" evidence="1">
    <location>
        <position position="70"/>
    </location>
    <ligand>
        <name>[4Fe-4S] cluster</name>
        <dbReference type="ChEBI" id="CHEBI:49883"/>
        <label>1</label>
    </ligand>
</feature>
<feature type="binding site" evidence="1">
    <location>
        <position position="73"/>
    </location>
    <ligand>
        <name>[4Fe-4S] cluster</name>
        <dbReference type="ChEBI" id="CHEBI:49883"/>
        <label>1</label>
    </ligand>
</feature>
<feature type="binding site" evidence="1">
    <location>
        <position position="76"/>
    </location>
    <ligand>
        <name>[4Fe-4S] cluster</name>
        <dbReference type="ChEBI" id="CHEBI:49883"/>
        <label>1</label>
    </ligand>
</feature>
<feature type="binding site" evidence="1">
    <location>
        <position position="80"/>
    </location>
    <ligand>
        <name>[4Fe-4S] cluster</name>
        <dbReference type="ChEBI" id="CHEBI:49883"/>
        <label>2</label>
    </ligand>
</feature>
<feature type="binding site" evidence="1">
    <location>
        <position position="109"/>
    </location>
    <ligand>
        <name>[4Fe-4S] cluster</name>
        <dbReference type="ChEBI" id="CHEBI:49883"/>
        <label>2</label>
    </ligand>
</feature>
<feature type="binding site" evidence="1">
    <location>
        <position position="112"/>
    </location>
    <ligand>
        <name>[4Fe-4S] cluster</name>
        <dbReference type="ChEBI" id="CHEBI:49883"/>
        <label>2</label>
    </ligand>
</feature>
<feature type="binding site" evidence="1">
    <location>
        <position position="115"/>
    </location>
    <ligand>
        <name>[4Fe-4S] cluster</name>
        <dbReference type="ChEBI" id="CHEBI:49883"/>
        <label>2</label>
    </ligand>
</feature>
<feature type="binding site" evidence="1">
    <location>
        <position position="119"/>
    </location>
    <ligand>
        <name>[4Fe-4S] cluster</name>
        <dbReference type="ChEBI" id="CHEBI:49883"/>
        <label>1</label>
    </ligand>
</feature>
<protein>
    <recommendedName>
        <fullName evidence="1">NADH-quinone oxidoreductase subunit I</fullName>
        <ecNumber evidence="1">7.1.1.-</ecNumber>
    </recommendedName>
    <alternativeName>
        <fullName evidence="1">NADH dehydrogenase I subunit I</fullName>
    </alternativeName>
    <alternativeName>
        <fullName evidence="1">NDH-1 subunit I</fullName>
    </alternativeName>
</protein>
<name>NUOI_VEREI</name>
<organism>
    <name type="scientific">Verminephrobacter eiseniae (strain EF01-2)</name>
    <dbReference type="NCBI Taxonomy" id="391735"/>
    <lineage>
        <taxon>Bacteria</taxon>
        <taxon>Pseudomonadati</taxon>
        <taxon>Pseudomonadota</taxon>
        <taxon>Betaproteobacteria</taxon>
        <taxon>Burkholderiales</taxon>
        <taxon>Comamonadaceae</taxon>
        <taxon>Verminephrobacter</taxon>
    </lineage>
</organism>
<keyword id="KW-0004">4Fe-4S</keyword>
<keyword id="KW-0997">Cell inner membrane</keyword>
<keyword id="KW-1003">Cell membrane</keyword>
<keyword id="KW-0408">Iron</keyword>
<keyword id="KW-0411">Iron-sulfur</keyword>
<keyword id="KW-0472">Membrane</keyword>
<keyword id="KW-0479">Metal-binding</keyword>
<keyword id="KW-0520">NAD</keyword>
<keyword id="KW-0874">Quinone</keyword>
<keyword id="KW-1185">Reference proteome</keyword>
<keyword id="KW-0677">Repeat</keyword>
<keyword id="KW-1278">Translocase</keyword>
<keyword id="KW-0830">Ubiquinone</keyword>
<comment type="function">
    <text evidence="1">NDH-1 shuttles electrons from NADH, via FMN and iron-sulfur (Fe-S) centers, to quinones in the respiratory chain. The immediate electron acceptor for the enzyme in this species is believed to be ubiquinone. Couples the redox reaction to proton translocation (for every two electrons transferred, four hydrogen ions are translocated across the cytoplasmic membrane), and thus conserves the redox energy in a proton gradient.</text>
</comment>
<comment type="catalytic activity">
    <reaction evidence="1">
        <text>a quinone + NADH + 5 H(+)(in) = a quinol + NAD(+) + 4 H(+)(out)</text>
        <dbReference type="Rhea" id="RHEA:57888"/>
        <dbReference type="ChEBI" id="CHEBI:15378"/>
        <dbReference type="ChEBI" id="CHEBI:24646"/>
        <dbReference type="ChEBI" id="CHEBI:57540"/>
        <dbReference type="ChEBI" id="CHEBI:57945"/>
        <dbReference type="ChEBI" id="CHEBI:132124"/>
    </reaction>
</comment>
<comment type="cofactor">
    <cofactor evidence="1">
        <name>[4Fe-4S] cluster</name>
        <dbReference type="ChEBI" id="CHEBI:49883"/>
    </cofactor>
    <text evidence="1">Binds 2 [4Fe-4S] clusters per subunit.</text>
</comment>
<comment type="subunit">
    <text evidence="1">NDH-1 is composed of 14 different subunits. Subunits NuoA, H, J, K, L, M, N constitute the membrane sector of the complex.</text>
</comment>
<comment type="subcellular location">
    <subcellularLocation>
        <location evidence="1">Cell inner membrane</location>
        <topology evidence="1">Peripheral membrane protein</topology>
    </subcellularLocation>
</comment>
<comment type="similarity">
    <text evidence="1">Belongs to the complex I 23 kDa subunit family.</text>
</comment>
<sequence>MTAVAAAPFSFKDFFKSFMLVELFKGMALTGRHAFRRKVTVQFPEEKTPLSPRFRGLHALRRYDNGEERCIACKLCEAVCPALAITIESELRADGSRRTTRYDIDLTKCIFCGFCEESCPVDSIVETHIFEYHGEKRGDLYFTKDMLLAVGDRYEAEIAAARAADAKYR</sequence>
<reference key="1">
    <citation type="submission" date="2006-12" db="EMBL/GenBank/DDBJ databases">
        <title>Complete sequence of chromosome 1 of Verminephrobacter eiseniae EF01-2.</title>
        <authorList>
            <person name="Copeland A."/>
            <person name="Lucas S."/>
            <person name="Lapidus A."/>
            <person name="Barry K."/>
            <person name="Detter J.C."/>
            <person name="Glavina del Rio T."/>
            <person name="Dalin E."/>
            <person name="Tice H."/>
            <person name="Pitluck S."/>
            <person name="Chertkov O."/>
            <person name="Brettin T."/>
            <person name="Bruce D."/>
            <person name="Han C."/>
            <person name="Tapia R."/>
            <person name="Gilna P."/>
            <person name="Schmutz J."/>
            <person name="Larimer F."/>
            <person name="Land M."/>
            <person name="Hauser L."/>
            <person name="Kyrpides N."/>
            <person name="Kim E."/>
            <person name="Stahl D."/>
            <person name="Richardson P."/>
        </authorList>
    </citation>
    <scope>NUCLEOTIDE SEQUENCE [LARGE SCALE GENOMIC DNA]</scope>
    <source>
        <strain>EF01-2</strain>
    </source>
</reference>
<evidence type="ECO:0000255" key="1">
    <source>
        <dbReference type="HAMAP-Rule" id="MF_01351"/>
    </source>
</evidence>
<accession>A1WLN6</accession>